<feature type="chain" id="PRO_0000237084" description="Small ribosomal subunit protein uS10">
    <location>
        <begin position="1"/>
        <end position="103"/>
    </location>
</feature>
<accession>Q4FUF7</accession>
<dbReference type="EMBL" id="CP000082">
    <property type="protein sequence ID" value="AAZ18351.1"/>
    <property type="molecule type" value="Genomic_DNA"/>
</dbReference>
<dbReference type="RefSeq" id="WP_010196670.1">
    <property type="nucleotide sequence ID" value="NC_007204.1"/>
</dbReference>
<dbReference type="SMR" id="Q4FUF7"/>
<dbReference type="STRING" id="259536.Psyc_0488"/>
<dbReference type="GeneID" id="60255488"/>
<dbReference type="KEGG" id="par:Psyc_0488"/>
<dbReference type="eggNOG" id="COG0051">
    <property type="taxonomic scope" value="Bacteria"/>
</dbReference>
<dbReference type="HOGENOM" id="CLU_122625_1_3_6"/>
<dbReference type="OrthoDB" id="9804464at2"/>
<dbReference type="Proteomes" id="UP000000546">
    <property type="component" value="Chromosome"/>
</dbReference>
<dbReference type="GO" id="GO:1990904">
    <property type="term" value="C:ribonucleoprotein complex"/>
    <property type="evidence" value="ECO:0007669"/>
    <property type="project" value="UniProtKB-KW"/>
</dbReference>
<dbReference type="GO" id="GO:0005840">
    <property type="term" value="C:ribosome"/>
    <property type="evidence" value="ECO:0007669"/>
    <property type="project" value="UniProtKB-KW"/>
</dbReference>
<dbReference type="GO" id="GO:0003735">
    <property type="term" value="F:structural constituent of ribosome"/>
    <property type="evidence" value="ECO:0007669"/>
    <property type="project" value="InterPro"/>
</dbReference>
<dbReference type="GO" id="GO:0000049">
    <property type="term" value="F:tRNA binding"/>
    <property type="evidence" value="ECO:0007669"/>
    <property type="project" value="UniProtKB-UniRule"/>
</dbReference>
<dbReference type="GO" id="GO:0006412">
    <property type="term" value="P:translation"/>
    <property type="evidence" value="ECO:0007669"/>
    <property type="project" value="UniProtKB-UniRule"/>
</dbReference>
<dbReference type="FunFam" id="3.30.70.600:FF:000001">
    <property type="entry name" value="30S ribosomal protein S10"/>
    <property type="match status" value="1"/>
</dbReference>
<dbReference type="Gene3D" id="3.30.70.600">
    <property type="entry name" value="Ribosomal protein S10 domain"/>
    <property type="match status" value="1"/>
</dbReference>
<dbReference type="HAMAP" id="MF_00508">
    <property type="entry name" value="Ribosomal_uS10"/>
    <property type="match status" value="1"/>
</dbReference>
<dbReference type="InterPro" id="IPR001848">
    <property type="entry name" value="Ribosomal_uS10"/>
</dbReference>
<dbReference type="InterPro" id="IPR018268">
    <property type="entry name" value="Ribosomal_uS10_CS"/>
</dbReference>
<dbReference type="InterPro" id="IPR027486">
    <property type="entry name" value="Ribosomal_uS10_dom"/>
</dbReference>
<dbReference type="InterPro" id="IPR036838">
    <property type="entry name" value="Ribosomal_uS10_dom_sf"/>
</dbReference>
<dbReference type="NCBIfam" id="NF001861">
    <property type="entry name" value="PRK00596.1"/>
    <property type="match status" value="1"/>
</dbReference>
<dbReference type="NCBIfam" id="TIGR01049">
    <property type="entry name" value="rpsJ_bact"/>
    <property type="match status" value="1"/>
</dbReference>
<dbReference type="PANTHER" id="PTHR11700">
    <property type="entry name" value="30S RIBOSOMAL PROTEIN S10 FAMILY MEMBER"/>
    <property type="match status" value="1"/>
</dbReference>
<dbReference type="Pfam" id="PF00338">
    <property type="entry name" value="Ribosomal_S10"/>
    <property type="match status" value="1"/>
</dbReference>
<dbReference type="PRINTS" id="PR00971">
    <property type="entry name" value="RIBOSOMALS10"/>
</dbReference>
<dbReference type="SMART" id="SM01403">
    <property type="entry name" value="Ribosomal_S10"/>
    <property type="match status" value="1"/>
</dbReference>
<dbReference type="SUPFAM" id="SSF54999">
    <property type="entry name" value="Ribosomal protein S10"/>
    <property type="match status" value="1"/>
</dbReference>
<dbReference type="PROSITE" id="PS00361">
    <property type="entry name" value="RIBOSOMAL_S10"/>
    <property type="match status" value="1"/>
</dbReference>
<name>RS10_PSYA2</name>
<gene>
    <name evidence="1" type="primary">rpsJ</name>
    <name type="ordered locus">Psyc_0488</name>
</gene>
<sequence>MANQRIRIRLKSFDHRLIDQSAQEIVDTAKRTGAQVCGPVPLPTRIERFNVLTSPHVNKDARDQYEIRTHKRMVDIVQPTDKTVDALMKLDLAAGVDVQIALG</sequence>
<reference key="1">
    <citation type="journal article" date="2010" name="Appl. Environ. Microbiol.">
        <title>The genome sequence of Psychrobacter arcticus 273-4, a psychroactive Siberian permafrost bacterium, reveals mechanisms for adaptation to low-temperature growth.</title>
        <authorList>
            <person name="Ayala-del-Rio H.L."/>
            <person name="Chain P.S."/>
            <person name="Grzymski J.J."/>
            <person name="Ponder M.A."/>
            <person name="Ivanova N."/>
            <person name="Bergholz P.W."/>
            <person name="Di Bartolo G."/>
            <person name="Hauser L."/>
            <person name="Land M."/>
            <person name="Bakermans C."/>
            <person name="Rodrigues D."/>
            <person name="Klappenbach J."/>
            <person name="Zarka D."/>
            <person name="Larimer F."/>
            <person name="Richardson P."/>
            <person name="Murray A."/>
            <person name="Thomashow M."/>
            <person name="Tiedje J.M."/>
        </authorList>
    </citation>
    <scope>NUCLEOTIDE SEQUENCE [LARGE SCALE GENOMIC DNA]</scope>
    <source>
        <strain>DSM 17307 / VKM B-2377 / 273-4</strain>
    </source>
</reference>
<comment type="function">
    <text evidence="1">Involved in the binding of tRNA to the ribosomes.</text>
</comment>
<comment type="subunit">
    <text evidence="1">Part of the 30S ribosomal subunit.</text>
</comment>
<comment type="similarity">
    <text evidence="1">Belongs to the universal ribosomal protein uS10 family.</text>
</comment>
<organism>
    <name type="scientific">Psychrobacter arcticus (strain DSM 17307 / VKM B-2377 / 273-4)</name>
    <dbReference type="NCBI Taxonomy" id="259536"/>
    <lineage>
        <taxon>Bacteria</taxon>
        <taxon>Pseudomonadati</taxon>
        <taxon>Pseudomonadota</taxon>
        <taxon>Gammaproteobacteria</taxon>
        <taxon>Moraxellales</taxon>
        <taxon>Moraxellaceae</taxon>
        <taxon>Psychrobacter</taxon>
    </lineage>
</organism>
<proteinExistence type="inferred from homology"/>
<evidence type="ECO:0000255" key="1">
    <source>
        <dbReference type="HAMAP-Rule" id="MF_00508"/>
    </source>
</evidence>
<evidence type="ECO:0000305" key="2"/>
<keyword id="KW-1185">Reference proteome</keyword>
<keyword id="KW-0687">Ribonucleoprotein</keyword>
<keyword id="KW-0689">Ribosomal protein</keyword>
<protein>
    <recommendedName>
        <fullName evidence="1">Small ribosomal subunit protein uS10</fullName>
    </recommendedName>
    <alternativeName>
        <fullName evidence="2">30S ribosomal protein S10</fullName>
    </alternativeName>
</protein>